<gene>
    <name evidence="1" type="primary">rpsG</name>
    <name type="ordered locus">RSc3023</name>
    <name type="ORF">RS04734</name>
</gene>
<protein>
    <recommendedName>
        <fullName evidence="1">Small ribosomal subunit protein uS7</fullName>
    </recommendedName>
    <alternativeName>
        <fullName evidence="2">30S ribosomal protein S7</fullName>
    </alternativeName>
</protein>
<proteinExistence type="inferred from homology"/>
<evidence type="ECO:0000255" key="1">
    <source>
        <dbReference type="HAMAP-Rule" id="MF_00480"/>
    </source>
</evidence>
<evidence type="ECO:0000305" key="2"/>
<organism>
    <name type="scientific">Ralstonia nicotianae (strain ATCC BAA-1114 / GMI1000)</name>
    <name type="common">Ralstonia solanacearum</name>
    <dbReference type="NCBI Taxonomy" id="267608"/>
    <lineage>
        <taxon>Bacteria</taxon>
        <taxon>Pseudomonadati</taxon>
        <taxon>Pseudomonadota</taxon>
        <taxon>Betaproteobacteria</taxon>
        <taxon>Burkholderiales</taxon>
        <taxon>Burkholderiaceae</taxon>
        <taxon>Ralstonia</taxon>
        <taxon>Ralstonia solanacearum species complex</taxon>
    </lineage>
</organism>
<comment type="function">
    <text evidence="1">One of the primary rRNA binding proteins, it binds directly to 16S rRNA where it nucleates assembly of the head domain of the 30S subunit. Is located at the subunit interface close to the decoding center, probably blocks exit of the E-site tRNA.</text>
</comment>
<comment type="subunit">
    <text evidence="1">Part of the 30S ribosomal subunit. Contacts proteins S9 and S11.</text>
</comment>
<comment type="similarity">
    <text evidence="1">Belongs to the universal ribosomal protein uS7 family.</text>
</comment>
<name>RS7_RALN1</name>
<dbReference type="EMBL" id="AL646052">
    <property type="protein sequence ID" value="CAD16732.1"/>
    <property type="molecule type" value="Genomic_DNA"/>
</dbReference>
<dbReference type="RefSeq" id="WP_004634470.1">
    <property type="nucleotide sequence ID" value="NC_003295.1"/>
</dbReference>
<dbReference type="SMR" id="Q8XV09"/>
<dbReference type="STRING" id="267608.RSc3023"/>
<dbReference type="EnsemblBacteria" id="CAD16732">
    <property type="protein sequence ID" value="CAD16732"/>
    <property type="gene ID" value="RSc3023"/>
</dbReference>
<dbReference type="GeneID" id="61527536"/>
<dbReference type="KEGG" id="rso:RSc3023"/>
<dbReference type="eggNOG" id="COG0049">
    <property type="taxonomic scope" value="Bacteria"/>
</dbReference>
<dbReference type="HOGENOM" id="CLU_072226_1_1_4"/>
<dbReference type="Proteomes" id="UP000001436">
    <property type="component" value="Chromosome"/>
</dbReference>
<dbReference type="GO" id="GO:0015935">
    <property type="term" value="C:small ribosomal subunit"/>
    <property type="evidence" value="ECO:0007669"/>
    <property type="project" value="InterPro"/>
</dbReference>
<dbReference type="GO" id="GO:0019843">
    <property type="term" value="F:rRNA binding"/>
    <property type="evidence" value="ECO:0007669"/>
    <property type="project" value="UniProtKB-UniRule"/>
</dbReference>
<dbReference type="GO" id="GO:0003735">
    <property type="term" value="F:structural constituent of ribosome"/>
    <property type="evidence" value="ECO:0007669"/>
    <property type="project" value="InterPro"/>
</dbReference>
<dbReference type="GO" id="GO:0000049">
    <property type="term" value="F:tRNA binding"/>
    <property type="evidence" value="ECO:0007669"/>
    <property type="project" value="UniProtKB-UniRule"/>
</dbReference>
<dbReference type="GO" id="GO:0006412">
    <property type="term" value="P:translation"/>
    <property type="evidence" value="ECO:0007669"/>
    <property type="project" value="UniProtKB-UniRule"/>
</dbReference>
<dbReference type="CDD" id="cd14869">
    <property type="entry name" value="uS7_Bacteria"/>
    <property type="match status" value="1"/>
</dbReference>
<dbReference type="FunFam" id="1.10.455.10:FF:000001">
    <property type="entry name" value="30S ribosomal protein S7"/>
    <property type="match status" value="1"/>
</dbReference>
<dbReference type="Gene3D" id="1.10.455.10">
    <property type="entry name" value="Ribosomal protein S7 domain"/>
    <property type="match status" value="1"/>
</dbReference>
<dbReference type="HAMAP" id="MF_00480_B">
    <property type="entry name" value="Ribosomal_uS7_B"/>
    <property type="match status" value="1"/>
</dbReference>
<dbReference type="InterPro" id="IPR000235">
    <property type="entry name" value="Ribosomal_uS7"/>
</dbReference>
<dbReference type="InterPro" id="IPR005717">
    <property type="entry name" value="Ribosomal_uS7_bac/org-type"/>
</dbReference>
<dbReference type="InterPro" id="IPR020606">
    <property type="entry name" value="Ribosomal_uS7_CS"/>
</dbReference>
<dbReference type="InterPro" id="IPR023798">
    <property type="entry name" value="Ribosomal_uS7_dom"/>
</dbReference>
<dbReference type="InterPro" id="IPR036823">
    <property type="entry name" value="Ribosomal_uS7_dom_sf"/>
</dbReference>
<dbReference type="NCBIfam" id="TIGR01029">
    <property type="entry name" value="rpsG_bact"/>
    <property type="match status" value="1"/>
</dbReference>
<dbReference type="PANTHER" id="PTHR11205">
    <property type="entry name" value="RIBOSOMAL PROTEIN S7"/>
    <property type="match status" value="1"/>
</dbReference>
<dbReference type="Pfam" id="PF00177">
    <property type="entry name" value="Ribosomal_S7"/>
    <property type="match status" value="1"/>
</dbReference>
<dbReference type="PIRSF" id="PIRSF002122">
    <property type="entry name" value="RPS7p_RPS7a_RPS5e_RPS7o"/>
    <property type="match status" value="1"/>
</dbReference>
<dbReference type="SUPFAM" id="SSF47973">
    <property type="entry name" value="Ribosomal protein S7"/>
    <property type="match status" value="1"/>
</dbReference>
<dbReference type="PROSITE" id="PS00052">
    <property type="entry name" value="RIBOSOMAL_S7"/>
    <property type="match status" value="1"/>
</dbReference>
<accession>Q8XV09</accession>
<feature type="chain" id="PRO_0000124325" description="Small ribosomal subunit protein uS7">
    <location>
        <begin position="1"/>
        <end position="156"/>
    </location>
</feature>
<keyword id="KW-1185">Reference proteome</keyword>
<keyword id="KW-0687">Ribonucleoprotein</keyword>
<keyword id="KW-0689">Ribosomal protein</keyword>
<keyword id="KW-0694">RNA-binding</keyword>
<keyword id="KW-0699">rRNA-binding</keyword>
<keyword id="KW-0820">tRNA-binding</keyword>
<reference key="1">
    <citation type="journal article" date="2002" name="Nature">
        <title>Genome sequence of the plant pathogen Ralstonia solanacearum.</title>
        <authorList>
            <person name="Salanoubat M."/>
            <person name="Genin S."/>
            <person name="Artiguenave F."/>
            <person name="Gouzy J."/>
            <person name="Mangenot S."/>
            <person name="Arlat M."/>
            <person name="Billault A."/>
            <person name="Brottier P."/>
            <person name="Camus J.-C."/>
            <person name="Cattolico L."/>
            <person name="Chandler M."/>
            <person name="Choisne N."/>
            <person name="Claudel-Renard C."/>
            <person name="Cunnac S."/>
            <person name="Demange N."/>
            <person name="Gaspin C."/>
            <person name="Lavie M."/>
            <person name="Moisan A."/>
            <person name="Robert C."/>
            <person name="Saurin W."/>
            <person name="Schiex T."/>
            <person name="Siguier P."/>
            <person name="Thebault P."/>
            <person name="Whalen M."/>
            <person name="Wincker P."/>
            <person name="Levy M."/>
            <person name="Weissenbach J."/>
            <person name="Boucher C.A."/>
        </authorList>
    </citation>
    <scope>NUCLEOTIDE SEQUENCE [LARGE SCALE GENOMIC DNA]</scope>
    <source>
        <strain>ATCC BAA-1114 / GMI1000</strain>
    </source>
</reference>
<sequence length="156" mass="17645">MPRRREVPKREILPDPKFGNVEVAKFMNVLMLDGKKSVAERIVYGAFDQIEKKAGKAPIEVFTLAIGNIKPVVEVKSRRVGGANYQVPVEVRPSRRLALAMRWLREAAKKRSEKSMALRLAGELLEASEGRGGAMKKRDEVHRMAEANKAFSHFRF</sequence>